<protein>
    <recommendedName>
        <fullName evidence="1">L-seryl-tRNA(Sec) selenium transferase</fullName>
        <ecNumber evidence="1">2.9.1.1</ecNumber>
    </recommendedName>
    <alternativeName>
        <fullName evidence="1">Selenocysteine synthase</fullName>
        <shortName evidence="1">Sec synthase</shortName>
    </alternativeName>
    <alternativeName>
        <fullName evidence="1">Selenocysteinyl-tRNA(Sec) synthase</fullName>
    </alternativeName>
</protein>
<reference key="1">
    <citation type="submission" date="2008-05" db="EMBL/GenBank/DDBJ databases">
        <title>Genome sequence of Clostridium botulinum Ba4 strain 657.</title>
        <authorList>
            <person name="Shrivastava S."/>
            <person name="Brown J.L."/>
            <person name="Bruce D."/>
            <person name="Detter C."/>
            <person name="Munk C."/>
            <person name="Smith L.A."/>
            <person name="Smith T.J."/>
            <person name="Sutton G."/>
            <person name="Brettin T.S."/>
        </authorList>
    </citation>
    <scope>NUCLEOTIDE SEQUENCE [LARGE SCALE GENOMIC DNA]</scope>
    <source>
        <strain>657 / Type Ba4</strain>
    </source>
</reference>
<organism>
    <name type="scientific">Clostridium botulinum (strain 657 / Type Ba4)</name>
    <dbReference type="NCBI Taxonomy" id="515621"/>
    <lineage>
        <taxon>Bacteria</taxon>
        <taxon>Bacillati</taxon>
        <taxon>Bacillota</taxon>
        <taxon>Clostridia</taxon>
        <taxon>Eubacteriales</taxon>
        <taxon>Clostridiaceae</taxon>
        <taxon>Clostridium</taxon>
    </lineage>
</organism>
<accession>C3L3I3</accession>
<gene>
    <name evidence="1" type="primary">selA</name>
    <name type="ordered locus">CLJ_B3233</name>
</gene>
<keyword id="KW-0963">Cytoplasm</keyword>
<keyword id="KW-0648">Protein biosynthesis</keyword>
<keyword id="KW-0663">Pyridoxal phosphate</keyword>
<keyword id="KW-0711">Selenium</keyword>
<keyword id="KW-0808">Transferase</keyword>
<dbReference type="EC" id="2.9.1.1" evidence="1"/>
<dbReference type="EMBL" id="CP001083">
    <property type="protein sequence ID" value="ACQ54059.1"/>
    <property type="molecule type" value="Genomic_DNA"/>
</dbReference>
<dbReference type="RefSeq" id="WP_012721137.1">
    <property type="nucleotide sequence ID" value="NC_012658.1"/>
</dbReference>
<dbReference type="SMR" id="C3L3I3"/>
<dbReference type="KEGG" id="cbi:CLJ_B3233"/>
<dbReference type="HOGENOM" id="CLU_038142_1_0_9"/>
<dbReference type="UniPathway" id="UPA00906">
    <property type="reaction ID" value="UER00896"/>
</dbReference>
<dbReference type="Proteomes" id="UP000002333">
    <property type="component" value="Chromosome"/>
</dbReference>
<dbReference type="GO" id="GO:0005737">
    <property type="term" value="C:cytoplasm"/>
    <property type="evidence" value="ECO:0007669"/>
    <property type="project" value="UniProtKB-SubCell"/>
</dbReference>
<dbReference type="GO" id="GO:0004125">
    <property type="term" value="F:L-seryl-tRNA(Sec) selenium transferase activity"/>
    <property type="evidence" value="ECO:0007669"/>
    <property type="project" value="UniProtKB-UniRule"/>
</dbReference>
<dbReference type="GO" id="GO:0001717">
    <property type="term" value="P:conversion of seryl-tRNAsec to selenocys-tRNAsec"/>
    <property type="evidence" value="ECO:0007669"/>
    <property type="project" value="UniProtKB-UniRule"/>
</dbReference>
<dbReference type="GO" id="GO:0001514">
    <property type="term" value="P:selenocysteine incorporation"/>
    <property type="evidence" value="ECO:0007669"/>
    <property type="project" value="UniProtKB-UniRule"/>
</dbReference>
<dbReference type="FunFam" id="3.40.640.10:FF:000028">
    <property type="entry name" value="L-seryl-tRNA(Sec) selenium transferase"/>
    <property type="match status" value="1"/>
</dbReference>
<dbReference type="Gene3D" id="3.90.1150.180">
    <property type="match status" value="1"/>
</dbReference>
<dbReference type="Gene3D" id="3.40.640.10">
    <property type="entry name" value="Type I PLP-dependent aspartate aminotransferase-like (Major domain)"/>
    <property type="match status" value="1"/>
</dbReference>
<dbReference type="HAMAP" id="MF_00423">
    <property type="entry name" value="SelA"/>
    <property type="match status" value="1"/>
</dbReference>
<dbReference type="InterPro" id="IPR015424">
    <property type="entry name" value="PyrdxlP-dep_Trfase"/>
</dbReference>
<dbReference type="InterPro" id="IPR015421">
    <property type="entry name" value="PyrdxlP-dep_Trfase_major"/>
</dbReference>
<dbReference type="InterPro" id="IPR018319">
    <property type="entry name" value="SelA-like"/>
</dbReference>
<dbReference type="InterPro" id="IPR004534">
    <property type="entry name" value="SelA_trans"/>
</dbReference>
<dbReference type="InterPro" id="IPR025862">
    <property type="entry name" value="SelA_trans_N_dom"/>
</dbReference>
<dbReference type="NCBIfam" id="TIGR00474">
    <property type="entry name" value="selA"/>
    <property type="match status" value="1"/>
</dbReference>
<dbReference type="PANTHER" id="PTHR32328">
    <property type="entry name" value="L-SERYL-TRNA(SEC) SELENIUM TRANSFERASE"/>
    <property type="match status" value="1"/>
</dbReference>
<dbReference type="PANTHER" id="PTHR32328:SF0">
    <property type="entry name" value="L-SERYL-TRNA(SEC) SELENIUM TRANSFERASE"/>
    <property type="match status" value="1"/>
</dbReference>
<dbReference type="Pfam" id="PF12390">
    <property type="entry name" value="Se-cys_synth_N"/>
    <property type="match status" value="1"/>
</dbReference>
<dbReference type="Pfam" id="PF03841">
    <property type="entry name" value="SelA"/>
    <property type="match status" value="1"/>
</dbReference>
<dbReference type="SUPFAM" id="SSF53383">
    <property type="entry name" value="PLP-dependent transferases"/>
    <property type="match status" value="1"/>
</dbReference>
<proteinExistence type="inferred from homology"/>
<feature type="chain" id="PRO_1000206055" description="L-seryl-tRNA(Sec) selenium transferase">
    <location>
        <begin position="1"/>
        <end position="462"/>
    </location>
</feature>
<feature type="modified residue" description="N6-(pyridoxal phosphate)lysine" evidence="1">
    <location>
        <position position="293"/>
    </location>
</feature>
<name>SELA_CLOB6</name>
<sequence>MDKKQLLRNLPKIDELLKEEIINRYLQENSRTLVVDSLRQSIDHYRGEILKNNIDSFTRENVVNYFIDTLEENKSTKFKKVINATGVVIHTNLGRSLLAKEAIENVVKVSENYSNLEYDLRKGKRGSRYSHVEELIKKVTGAEAAMVVNNNAAAVMLALNTLCEEREAIVSRGQLVEIGGSFRVPDVMKFSRAHLVEVGTTNRTHLYDYENNINENTGVLLKVHTSNFKIMGFTEEVSSEEMVQLGEKYKLPVMEDIGSGTLVDFSKYGFTYEPTVQSSLEKGVDVVTFSGDKMLGGPQAGIIVGKKKYIDKMKKNQLTRALRIDKMTLAALEGTLKCYIDEKEAIENIPTLNMILSSKDIHKKRAQRLKRRLQNNVKDFNFKVSEDLSMVGGGSMPGERIPTYVVKVNSDKITAEKIEEKLRLSKDPIIVRVSKDEVILDVRTLFERDFNIIVEEFKKLLK</sequence>
<evidence type="ECO:0000255" key="1">
    <source>
        <dbReference type="HAMAP-Rule" id="MF_00423"/>
    </source>
</evidence>
<comment type="function">
    <text evidence="1">Converts seryl-tRNA(Sec) to selenocysteinyl-tRNA(Sec) required for selenoprotein biosynthesis.</text>
</comment>
<comment type="catalytic activity">
    <reaction evidence="1">
        <text>L-seryl-tRNA(Sec) + selenophosphate + H(+) = L-selenocysteinyl-tRNA(Sec) + phosphate</text>
        <dbReference type="Rhea" id="RHEA:22728"/>
        <dbReference type="Rhea" id="RHEA-COMP:9742"/>
        <dbReference type="Rhea" id="RHEA-COMP:9743"/>
        <dbReference type="ChEBI" id="CHEBI:15378"/>
        <dbReference type="ChEBI" id="CHEBI:16144"/>
        <dbReference type="ChEBI" id="CHEBI:43474"/>
        <dbReference type="ChEBI" id="CHEBI:78533"/>
        <dbReference type="ChEBI" id="CHEBI:78573"/>
        <dbReference type="EC" id="2.9.1.1"/>
    </reaction>
</comment>
<comment type="cofactor">
    <cofactor evidence="1">
        <name>pyridoxal 5'-phosphate</name>
        <dbReference type="ChEBI" id="CHEBI:597326"/>
    </cofactor>
</comment>
<comment type="pathway">
    <text evidence="1">Aminoacyl-tRNA biosynthesis; selenocysteinyl-tRNA(Sec) biosynthesis; selenocysteinyl-tRNA(Sec) from L-seryl-tRNA(Sec) (bacterial route): step 1/1.</text>
</comment>
<comment type="subcellular location">
    <subcellularLocation>
        <location evidence="1">Cytoplasm</location>
    </subcellularLocation>
</comment>
<comment type="similarity">
    <text evidence="1">Belongs to the SelA family.</text>
</comment>